<evidence type="ECO:0000255" key="1">
    <source>
        <dbReference type="HAMAP-Rule" id="MF_01006"/>
    </source>
</evidence>
<proteinExistence type="inferred from homology"/>
<gene>
    <name evidence="1" type="primary">uppP</name>
    <name type="ordered locus">NWMN_0652</name>
</gene>
<accession>A6QEZ2</accession>
<protein>
    <recommendedName>
        <fullName evidence="1">Undecaprenyl-diphosphatase</fullName>
        <ecNumber evidence="1">3.6.1.27</ecNumber>
    </recommendedName>
    <alternativeName>
        <fullName evidence="1">Bacitracin resistance protein</fullName>
    </alternativeName>
    <alternativeName>
        <fullName evidence="1">Undecaprenyl pyrophosphate phosphatase</fullName>
    </alternativeName>
</protein>
<organism>
    <name type="scientific">Staphylococcus aureus (strain Newman)</name>
    <dbReference type="NCBI Taxonomy" id="426430"/>
    <lineage>
        <taxon>Bacteria</taxon>
        <taxon>Bacillati</taxon>
        <taxon>Bacillota</taxon>
        <taxon>Bacilli</taxon>
        <taxon>Bacillales</taxon>
        <taxon>Staphylococcaceae</taxon>
        <taxon>Staphylococcus</taxon>
    </lineage>
</organism>
<reference key="1">
    <citation type="journal article" date="2008" name="J. Bacteriol.">
        <title>Genome sequence of Staphylococcus aureus strain Newman and comparative analysis of staphylococcal genomes: polymorphism and evolution of two major pathogenicity islands.</title>
        <authorList>
            <person name="Baba T."/>
            <person name="Bae T."/>
            <person name="Schneewind O."/>
            <person name="Takeuchi F."/>
            <person name="Hiramatsu K."/>
        </authorList>
    </citation>
    <scope>NUCLEOTIDE SEQUENCE [LARGE SCALE GENOMIC DNA]</scope>
    <source>
        <strain>Newman</strain>
    </source>
</reference>
<dbReference type="EC" id="3.6.1.27" evidence="1"/>
<dbReference type="EMBL" id="AP009351">
    <property type="protein sequence ID" value="BAF66924.1"/>
    <property type="molecule type" value="Genomic_DNA"/>
</dbReference>
<dbReference type="RefSeq" id="WP_000469890.1">
    <property type="nucleotide sequence ID" value="NZ_JBBIAE010000002.1"/>
</dbReference>
<dbReference type="SMR" id="A6QEZ2"/>
<dbReference type="KEGG" id="sae:NWMN_0652"/>
<dbReference type="HOGENOM" id="CLU_060296_2_0_9"/>
<dbReference type="Proteomes" id="UP000006386">
    <property type="component" value="Chromosome"/>
</dbReference>
<dbReference type="GO" id="GO:0005886">
    <property type="term" value="C:plasma membrane"/>
    <property type="evidence" value="ECO:0007669"/>
    <property type="project" value="UniProtKB-SubCell"/>
</dbReference>
<dbReference type="GO" id="GO:0050380">
    <property type="term" value="F:undecaprenyl-diphosphatase activity"/>
    <property type="evidence" value="ECO:0007669"/>
    <property type="project" value="UniProtKB-UniRule"/>
</dbReference>
<dbReference type="GO" id="GO:0071555">
    <property type="term" value="P:cell wall organization"/>
    <property type="evidence" value="ECO:0007669"/>
    <property type="project" value="UniProtKB-KW"/>
</dbReference>
<dbReference type="GO" id="GO:0009252">
    <property type="term" value="P:peptidoglycan biosynthetic process"/>
    <property type="evidence" value="ECO:0007669"/>
    <property type="project" value="UniProtKB-KW"/>
</dbReference>
<dbReference type="GO" id="GO:0008360">
    <property type="term" value="P:regulation of cell shape"/>
    <property type="evidence" value="ECO:0007669"/>
    <property type="project" value="UniProtKB-KW"/>
</dbReference>
<dbReference type="GO" id="GO:0046677">
    <property type="term" value="P:response to antibiotic"/>
    <property type="evidence" value="ECO:0007669"/>
    <property type="project" value="UniProtKB-UniRule"/>
</dbReference>
<dbReference type="HAMAP" id="MF_01006">
    <property type="entry name" value="Undec_diphosphatase"/>
    <property type="match status" value="1"/>
</dbReference>
<dbReference type="InterPro" id="IPR003824">
    <property type="entry name" value="UppP"/>
</dbReference>
<dbReference type="NCBIfam" id="NF001390">
    <property type="entry name" value="PRK00281.1-4"/>
    <property type="match status" value="1"/>
</dbReference>
<dbReference type="NCBIfam" id="TIGR00753">
    <property type="entry name" value="undec_PP_bacA"/>
    <property type="match status" value="1"/>
</dbReference>
<dbReference type="PANTHER" id="PTHR30622">
    <property type="entry name" value="UNDECAPRENYL-DIPHOSPHATASE"/>
    <property type="match status" value="1"/>
</dbReference>
<dbReference type="PANTHER" id="PTHR30622:SF3">
    <property type="entry name" value="UNDECAPRENYL-DIPHOSPHATASE"/>
    <property type="match status" value="1"/>
</dbReference>
<dbReference type="Pfam" id="PF02673">
    <property type="entry name" value="BacA"/>
    <property type="match status" value="1"/>
</dbReference>
<feature type="chain" id="PRO_1000072896" description="Undecaprenyl-diphosphatase">
    <location>
        <begin position="1"/>
        <end position="291"/>
    </location>
</feature>
<feature type="transmembrane region" description="Helical" evidence="1">
    <location>
        <begin position="1"/>
        <end position="21"/>
    </location>
</feature>
<feature type="transmembrane region" description="Helical" evidence="1">
    <location>
        <begin position="48"/>
        <end position="68"/>
    </location>
</feature>
<feature type="transmembrane region" description="Helical" evidence="1">
    <location>
        <begin position="102"/>
        <end position="122"/>
    </location>
</feature>
<feature type="transmembrane region" description="Helical" evidence="1">
    <location>
        <begin position="126"/>
        <end position="146"/>
    </location>
</feature>
<feature type="transmembrane region" description="Helical" evidence="1">
    <location>
        <begin position="162"/>
        <end position="182"/>
    </location>
</feature>
<feature type="transmembrane region" description="Helical" evidence="1">
    <location>
        <begin position="203"/>
        <end position="223"/>
    </location>
</feature>
<feature type="transmembrane region" description="Helical" evidence="1">
    <location>
        <begin position="231"/>
        <end position="251"/>
    </location>
</feature>
<feature type="transmembrane region" description="Helical" evidence="1">
    <location>
        <begin position="267"/>
        <end position="287"/>
    </location>
</feature>
<name>UPPP_STAAE</name>
<sequence length="291" mass="32269">MFIIELIKGIILGVVEGLTEFAPVSSTGHMILVDDMWLKSSEFLGSQSAFTFKIVIQLGSVFAAAWVFRERFLEILHIGKHKHVEGDNDQQRRSKPRRLNLLHVLVGMVPAGILGLLFDDFIEEHLFSVPTVMIGLFVGAIYMIIADKYSAKVKNPQTVDQISYFQAFVIGISQAVAMWPGFSRSGSTISTGVLMKLNHKAASDFTFIMAVPIMLAASGLSLLKHYQDIQIADIPFYILGFLAAFTVGLIAIKTFLHLINKIKLIPFAIYRIVLVIFIAILYFGFGIGKGI</sequence>
<comment type="function">
    <text evidence="1">Catalyzes the dephosphorylation of undecaprenyl diphosphate (UPP). Confers resistance to bacitracin.</text>
</comment>
<comment type="catalytic activity">
    <reaction evidence="1">
        <text>di-trans,octa-cis-undecaprenyl diphosphate + H2O = di-trans,octa-cis-undecaprenyl phosphate + phosphate + H(+)</text>
        <dbReference type="Rhea" id="RHEA:28094"/>
        <dbReference type="ChEBI" id="CHEBI:15377"/>
        <dbReference type="ChEBI" id="CHEBI:15378"/>
        <dbReference type="ChEBI" id="CHEBI:43474"/>
        <dbReference type="ChEBI" id="CHEBI:58405"/>
        <dbReference type="ChEBI" id="CHEBI:60392"/>
        <dbReference type="EC" id="3.6.1.27"/>
    </reaction>
</comment>
<comment type="subcellular location">
    <subcellularLocation>
        <location evidence="1">Cell membrane</location>
        <topology evidence="1">Multi-pass membrane protein</topology>
    </subcellularLocation>
</comment>
<comment type="miscellaneous">
    <text>Bacitracin is thought to be involved in the inhibition of peptidoglycan synthesis by sequestering undecaprenyl diphosphate, thereby reducing the pool of lipid carrier available.</text>
</comment>
<comment type="similarity">
    <text evidence="1">Belongs to the UppP family.</text>
</comment>
<keyword id="KW-0046">Antibiotic resistance</keyword>
<keyword id="KW-1003">Cell membrane</keyword>
<keyword id="KW-0133">Cell shape</keyword>
<keyword id="KW-0961">Cell wall biogenesis/degradation</keyword>
<keyword id="KW-0378">Hydrolase</keyword>
<keyword id="KW-0472">Membrane</keyword>
<keyword id="KW-0573">Peptidoglycan synthesis</keyword>
<keyword id="KW-0812">Transmembrane</keyword>
<keyword id="KW-1133">Transmembrane helix</keyword>